<accession>Q2IMY8</accession>
<dbReference type="EC" id="1.1.1.94" evidence="1"/>
<dbReference type="EMBL" id="CP000251">
    <property type="protein sequence ID" value="ABC80172.1"/>
    <property type="molecule type" value="Genomic_DNA"/>
</dbReference>
<dbReference type="RefSeq" id="WP_011419455.1">
    <property type="nucleotide sequence ID" value="NC_007760.1"/>
</dbReference>
<dbReference type="SMR" id="Q2IMY8"/>
<dbReference type="STRING" id="290397.Adeh_0396"/>
<dbReference type="KEGG" id="ade:Adeh_0396"/>
<dbReference type="eggNOG" id="COG0240">
    <property type="taxonomic scope" value="Bacteria"/>
</dbReference>
<dbReference type="HOGENOM" id="CLU_033449_0_2_7"/>
<dbReference type="OrthoDB" id="9812273at2"/>
<dbReference type="UniPathway" id="UPA00940"/>
<dbReference type="Proteomes" id="UP000001935">
    <property type="component" value="Chromosome"/>
</dbReference>
<dbReference type="GO" id="GO:0005829">
    <property type="term" value="C:cytosol"/>
    <property type="evidence" value="ECO:0007669"/>
    <property type="project" value="TreeGrafter"/>
</dbReference>
<dbReference type="GO" id="GO:0047952">
    <property type="term" value="F:glycerol-3-phosphate dehydrogenase [NAD(P)+] activity"/>
    <property type="evidence" value="ECO:0007669"/>
    <property type="project" value="UniProtKB-UniRule"/>
</dbReference>
<dbReference type="GO" id="GO:0051287">
    <property type="term" value="F:NAD binding"/>
    <property type="evidence" value="ECO:0007669"/>
    <property type="project" value="InterPro"/>
</dbReference>
<dbReference type="GO" id="GO:0005975">
    <property type="term" value="P:carbohydrate metabolic process"/>
    <property type="evidence" value="ECO:0007669"/>
    <property type="project" value="InterPro"/>
</dbReference>
<dbReference type="GO" id="GO:0046167">
    <property type="term" value="P:glycerol-3-phosphate biosynthetic process"/>
    <property type="evidence" value="ECO:0007669"/>
    <property type="project" value="UniProtKB-UniRule"/>
</dbReference>
<dbReference type="GO" id="GO:0046168">
    <property type="term" value="P:glycerol-3-phosphate catabolic process"/>
    <property type="evidence" value="ECO:0007669"/>
    <property type="project" value="InterPro"/>
</dbReference>
<dbReference type="GO" id="GO:0006650">
    <property type="term" value="P:glycerophospholipid metabolic process"/>
    <property type="evidence" value="ECO:0007669"/>
    <property type="project" value="UniProtKB-UniRule"/>
</dbReference>
<dbReference type="GO" id="GO:0008654">
    <property type="term" value="P:phospholipid biosynthetic process"/>
    <property type="evidence" value="ECO:0007669"/>
    <property type="project" value="UniProtKB-KW"/>
</dbReference>
<dbReference type="FunFam" id="1.10.1040.10:FF:000001">
    <property type="entry name" value="Glycerol-3-phosphate dehydrogenase [NAD(P)+]"/>
    <property type="match status" value="1"/>
</dbReference>
<dbReference type="FunFam" id="3.40.50.720:FF:000019">
    <property type="entry name" value="Glycerol-3-phosphate dehydrogenase [NAD(P)+]"/>
    <property type="match status" value="1"/>
</dbReference>
<dbReference type="Gene3D" id="1.10.1040.10">
    <property type="entry name" value="N-(1-d-carboxylethyl)-l-norvaline Dehydrogenase, domain 2"/>
    <property type="match status" value="1"/>
</dbReference>
<dbReference type="Gene3D" id="3.40.50.720">
    <property type="entry name" value="NAD(P)-binding Rossmann-like Domain"/>
    <property type="match status" value="1"/>
</dbReference>
<dbReference type="HAMAP" id="MF_00394">
    <property type="entry name" value="NAD_Glyc3P_dehydrog"/>
    <property type="match status" value="1"/>
</dbReference>
<dbReference type="InterPro" id="IPR008927">
    <property type="entry name" value="6-PGluconate_DH-like_C_sf"/>
</dbReference>
<dbReference type="InterPro" id="IPR013328">
    <property type="entry name" value="6PGD_dom2"/>
</dbReference>
<dbReference type="InterPro" id="IPR006168">
    <property type="entry name" value="G3P_DH_NAD-dep"/>
</dbReference>
<dbReference type="InterPro" id="IPR006109">
    <property type="entry name" value="G3P_DH_NAD-dep_C"/>
</dbReference>
<dbReference type="InterPro" id="IPR011128">
    <property type="entry name" value="G3P_DH_NAD-dep_N"/>
</dbReference>
<dbReference type="InterPro" id="IPR036291">
    <property type="entry name" value="NAD(P)-bd_dom_sf"/>
</dbReference>
<dbReference type="NCBIfam" id="NF000940">
    <property type="entry name" value="PRK00094.1-2"/>
    <property type="match status" value="1"/>
</dbReference>
<dbReference type="NCBIfam" id="NF000942">
    <property type="entry name" value="PRK00094.1-4"/>
    <property type="match status" value="1"/>
</dbReference>
<dbReference type="PANTHER" id="PTHR11728">
    <property type="entry name" value="GLYCEROL-3-PHOSPHATE DEHYDROGENASE"/>
    <property type="match status" value="1"/>
</dbReference>
<dbReference type="PANTHER" id="PTHR11728:SF1">
    <property type="entry name" value="GLYCEROL-3-PHOSPHATE DEHYDROGENASE [NAD(+)] 2, CHLOROPLASTIC"/>
    <property type="match status" value="1"/>
</dbReference>
<dbReference type="Pfam" id="PF07479">
    <property type="entry name" value="NAD_Gly3P_dh_C"/>
    <property type="match status" value="1"/>
</dbReference>
<dbReference type="Pfam" id="PF01210">
    <property type="entry name" value="NAD_Gly3P_dh_N"/>
    <property type="match status" value="1"/>
</dbReference>
<dbReference type="PIRSF" id="PIRSF000114">
    <property type="entry name" value="Glycerol-3-P_dh"/>
    <property type="match status" value="1"/>
</dbReference>
<dbReference type="PRINTS" id="PR00077">
    <property type="entry name" value="GPDHDRGNASE"/>
</dbReference>
<dbReference type="SUPFAM" id="SSF48179">
    <property type="entry name" value="6-phosphogluconate dehydrogenase C-terminal domain-like"/>
    <property type="match status" value="1"/>
</dbReference>
<dbReference type="SUPFAM" id="SSF51735">
    <property type="entry name" value="NAD(P)-binding Rossmann-fold domains"/>
    <property type="match status" value="1"/>
</dbReference>
<organism>
    <name type="scientific">Anaeromyxobacter dehalogenans (strain 2CP-C)</name>
    <dbReference type="NCBI Taxonomy" id="290397"/>
    <lineage>
        <taxon>Bacteria</taxon>
        <taxon>Pseudomonadati</taxon>
        <taxon>Myxococcota</taxon>
        <taxon>Myxococcia</taxon>
        <taxon>Myxococcales</taxon>
        <taxon>Cystobacterineae</taxon>
        <taxon>Anaeromyxobacteraceae</taxon>
        <taxon>Anaeromyxobacter</taxon>
    </lineage>
</organism>
<protein>
    <recommendedName>
        <fullName evidence="1">Glycerol-3-phosphate dehydrogenase [NAD(P)+]</fullName>
        <ecNumber evidence="1">1.1.1.94</ecNumber>
    </recommendedName>
    <alternativeName>
        <fullName evidence="1">NAD(P)(+)-dependent glycerol-3-phosphate dehydrogenase</fullName>
    </alternativeName>
    <alternativeName>
        <fullName evidence="1">NAD(P)H-dependent dihydroxyacetone-phosphate reductase</fullName>
    </alternativeName>
</protein>
<proteinExistence type="inferred from homology"/>
<comment type="function">
    <text evidence="1">Catalyzes the reduction of the glycolytic intermediate dihydroxyacetone phosphate (DHAP) to sn-glycerol 3-phosphate (G3P), the key precursor for phospholipid synthesis.</text>
</comment>
<comment type="catalytic activity">
    <reaction evidence="1">
        <text>sn-glycerol 3-phosphate + NAD(+) = dihydroxyacetone phosphate + NADH + H(+)</text>
        <dbReference type="Rhea" id="RHEA:11092"/>
        <dbReference type="ChEBI" id="CHEBI:15378"/>
        <dbReference type="ChEBI" id="CHEBI:57540"/>
        <dbReference type="ChEBI" id="CHEBI:57597"/>
        <dbReference type="ChEBI" id="CHEBI:57642"/>
        <dbReference type="ChEBI" id="CHEBI:57945"/>
        <dbReference type="EC" id="1.1.1.94"/>
    </reaction>
    <physiologicalReaction direction="right-to-left" evidence="1">
        <dbReference type="Rhea" id="RHEA:11094"/>
    </physiologicalReaction>
</comment>
<comment type="catalytic activity">
    <reaction evidence="1">
        <text>sn-glycerol 3-phosphate + NADP(+) = dihydroxyacetone phosphate + NADPH + H(+)</text>
        <dbReference type="Rhea" id="RHEA:11096"/>
        <dbReference type="ChEBI" id="CHEBI:15378"/>
        <dbReference type="ChEBI" id="CHEBI:57597"/>
        <dbReference type="ChEBI" id="CHEBI:57642"/>
        <dbReference type="ChEBI" id="CHEBI:57783"/>
        <dbReference type="ChEBI" id="CHEBI:58349"/>
        <dbReference type="EC" id="1.1.1.94"/>
    </reaction>
    <physiologicalReaction direction="right-to-left" evidence="1">
        <dbReference type="Rhea" id="RHEA:11098"/>
    </physiologicalReaction>
</comment>
<comment type="pathway">
    <text evidence="1">Membrane lipid metabolism; glycerophospholipid metabolism.</text>
</comment>
<comment type="subcellular location">
    <subcellularLocation>
        <location evidence="1">Cytoplasm</location>
    </subcellularLocation>
</comment>
<comment type="similarity">
    <text evidence="1">Belongs to the NAD-dependent glycerol-3-phosphate dehydrogenase family.</text>
</comment>
<keyword id="KW-0963">Cytoplasm</keyword>
<keyword id="KW-0444">Lipid biosynthesis</keyword>
<keyword id="KW-0443">Lipid metabolism</keyword>
<keyword id="KW-0520">NAD</keyword>
<keyword id="KW-0521">NADP</keyword>
<keyword id="KW-0547">Nucleotide-binding</keyword>
<keyword id="KW-0560">Oxidoreductase</keyword>
<keyword id="KW-0594">Phospholipid biosynthesis</keyword>
<keyword id="KW-1208">Phospholipid metabolism</keyword>
<keyword id="KW-1185">Reference proteome</keyword>
<reference key="1">
    <citation type="submission" date="2006-01" db="EMBL/GenBank/DDBJ databases">
        <title>Complete sequence of Anaeromyxobacter dehalogenans 2CP-C.</title>
        <authorList>
            <person name="Copeland A."/>
            <person name="Lucas S."/>
            <person name="Lapidus A."/>
            <person name="Barry K."/>
            <person name="Detter J.C."/>
            <person name="Glavina T."/>
            <person name="Hammon N."/>
            <person name="Israni S."/>
            <person name="Pitluck S."/>
            <person name="Brettin T."/>
            <person name="Bruce D."/>
            <person name="Han C."/>
            <person name="Tapia R."/>
            <person name="Gilna P."/>
            <person name="Kiss H."/>
            <person name="Schmutz J."/>
            <person name="Larimer F."/>
            <person name="Land M."/>
            <person name="Kyrpides N."/>
            <person name="Anderson I."/>
            <person name="Sanford R.A."/>
            <person name="Ritalahti K.M."/>
            <person name="Thomas H.S."/>
            <person name="Kirby J.R."/>
            <person name="Zhulin I.B."/>
            <person name="Loeffler F.E."/>
            <person name="Richardson P."/>
        </authorList>
    </citation>
    <scope>NUCLEOTIDE SEQUENCE [LARGE SCALE GENOMIC DNA]</scope>
    <source>
        <strain>2CP-C</strain>
    </source>
</reference>
<feature type="chain" id="PRO_0000255277" description="Glycerol-3-phosphate dehydrogenase [NAD(P)+]">
    <location>
        <begin position="1"/>
        <end position="332"/>
    </location>
</feature>
<feature type="active site" description="Proton acceptor" evidence="1">
    <location>
        <position position="191"/>
    </location>
</feature>
<feature type="binding site" evidence="1">
    <location>
        <position position="10"/>
    </location>
    <ligand>
        <name>NADPH</name>
        <dbReference type="ChEBI" id="CHEBI:57783"/>
    </ligand>
</feature>
<feature type="binding site" evidence="1">
    <location>
        <position position="11"/>
    </location>
    <ligand>
        <name>NADPH</name>
        <dbReference type="ChEBI" id="CHEBI:57783"/>
    </ligand>
</feature>
<feature type="binding site" evidence="1">
    <location>
        <position position="31"/>
    </location>
    <ligand>
        <name>NADPH</name>
        <dbReference type="ChEBI" id="CHEBI:57783"/>
    </ligand>
</feature>
<feature type="binding site" evidence="1">
    <location>
        <position position="105"/>
    </location>
    <ligand>
        <name>NADPH</name>
        <dbReference type="ChEBI" id="CHEBI:57783"/>
    </ligand>
</feature>
<feature type="binding site" evidence="1">
    <location>
        <position position="105"/>
    </location>
    <ligand>
        <name>sn-glycerol 3-phosphate</name>
        <dbReference type="ChEBI" id="CHEBI:57597"/>
    </ligand>
</feature>
<feature type="binding site" evidence="1">
    <location>
        <position position="136"/>
    </location>
    <ligand>
        <name>sn-glycerol 3-phosphate</name>
        <dbReference type="ChEBI" id="CHEBI:57597"/>
    </ligand>
</feature>
<feature type="binding site" evidence="1">
    <location>
        <position position="138"/>
    </location>
    <ligand>
        <name>sn-glycerol 3-phosphate</name>
        <dbReference type="ChEBI" id="CHEBI:57597"/>
    </ligand>
</feature>
<feature type="binding site" evidence="1">
    <location>
        <position position="140"/>
    </location>
    <ligand>
        <name>NADPH</name>
        <dbReference type="ChEBI" id="CHEBI:57783"/>
    </ligand>
</feature>
<feature type="binding site" evidence="1">
    <location>
        <position position="191"/>
    </location>
    <ligand>
        <name>sn-glycerol 3-phosphate</name>
        <dbReference type="ChEBI" id="CHEBI:57597"/>
    </ligand>
</feature>
<feature type="binding site" evidence="1">
    <location>
        <position position="244"/>
    </location>
    <ligand>
        <name>sn-glycerol 3-phosphate</name>
        <dbReference type="ChEBI" id="CHEBI:57597"/>
    </ligand>
</feature>
<feature type="binding site" evidence="1">
    <location>
        <position position="254"/>
    </location>
    <ligand>
        <name>sn-glycerol 3-phosphate</name>
        <dbReference type="ChEBI" id="CHEBI:57597"/>
    </ligand>
</feature>
<feature type="binding site" evidence="1">
    <location>
        <position position="255"/>
    </location>
    <ligand>
        <name>NADPH</name>
        <dbReference type="ChEBI" id="CHEBI:57783"/>
    </ligand>
</feature>
<feature type="binding site" evidence="1">
    <location>
        <position position="255"/>
    </location>
    <ligand>
        <name>sn-glycerol 3-phosphate</name>
        <dbReference type="ChEBI" id="CHEBI:57597"/>
    </ligand>
</feature>
<feature type="binding site" evidence="1">
    <location>
        <position position="256"/>
    </location>
    <ligand>
        <name>sn-glycerol 3-phosphate</name>
        <dbReference type="ChEBI" id="CHEBI:57597"/>
    </ligand>
</feature>
<feature type="binding site" evidence="1">
    <location>
        <position position="279"/>
    </location>
    <ligand>
        <name>NADPH</name>
        <dbReference type="ChEBI" id="CHEBI:57783"/>
    </ligand>
</feature>
<feature type="binding site" evidence="1">
    <location>
        <position position="281"/>
    </location>
    <ligand>
        <name>NADPH</name>
        <dbReference type="ChEBI" id="CHEBI:57783"/>
    </ligand>
</feature>
<evidence type="ECO:0000255" key="1">
    <source>
        <dbReference type="HAMAP-Rule" id="MF_00394"/>
    </source>
</evidence>
<name>GPDA_ANADE</name>
<gene>
    <name evidence="1" type="primary">gpsA</name>
    <name type="ordered locus">Adeh_0396</name>
</gene>
<sequence>MRATVLGAGSWGTALASLLAGKGYTVTSWDKDAAVLDDIARNHRNERYLPGLHLPPTLHASAEVAKALEGAELVVLAVPSHAVRPVVIEAKRHVHAGTPIVCVAKGIELDTLMTMTEVVEDVLPVPLHPYLAVLSGPSFAKEVAKGLPTAVTVAARWERIAKQVQDAFHTKTFRPYTSGDVVGCEIGGCVKNVVAIAAGISDGMGFGANAMAALVTRGLAEITRLAVRKGANPLTLSGLAGLGDLVLTCSSDLSRNRTVGRGLAEGKTADAIQRELGQVAEGVRNARSARELAKRLGVEMPITEAIYRVLYEGLAPREAVTALMMRETKPEL</sequence>